<accession>Q5MAV4</accession>
<feature type="chain" id="PRO_0000405379" description="Uncharacterized protein A2">
    <location>
        <begin position="1"/>
        <end position="125"/>
    </location>
</feature>
<organismHost>
    <name type="scientific">Microplitis demolitor</name>
    <name type="common">Parasitoid wasp</name>
    <dbReference type="NCBI Taxonomy" id="69319"/>
</organismHost>
<protein>
    <recommendedName>
        <fullName>Uncharacterized protein A2</fullName>
    </recommendedName>
</protein>
<reference key="1">
    <citation type="journal article" date="2006" name="Virology">
        <title>Polydnavirus genomes reflect their dual roles as mutualists and pathogens.</title>
        <authorList>
            <person name="Webb B.A."/>
            <person name="Strand M.R."/>
            <person name="Dickey S.E."/>
            <person name="Beck M.H."/>
            <person name="Hilgarth R.S."/>
            <person name="Barney W.E."/>
            <person name="Kadash K."/>
            <person name="Kroemer J.A."/>
            <person name="Lindstrom K.G."/>
            <person name="Rattanadechakul W."/>
            <person name="Shelby K.S."/>
            <person name="Thoetkiattikul H."/>
            <person name="Turnbull M.W."/>
            <person name="Witherell R.A."/>
        </authorList>
    </citation>
    <scope>NUCLEOTIDE SEQUENCE [GENOMIC DNA]</scope>
</reference>
<keyword id="KW-1185">Reference proteome</keyword>
<name>YA2_MDBVW</name>
<dbReference type="EMBL" id="AY842013">
    <property type="protein sequence ID" value="AAW24442.1"/>
    <property type="molecule type" value="Genomic_DNA"/>
</dbReference>
<dbReference type="RefSeq" id="YP_239363.1">
    <property type="nucleotide sequence ID" value="NC_007028.1"/>
</dbReference>
<dbReference type="KEGG" id="vg:5075798"/>
<dbReference type="Proteomes" id="UP000008168">
    <property type="component" value="Genome"/>
</dbReference>
<proteinExistence type="predicted"/>
<gene>
    <name type="primary">A2</name>
</gene>
<organism>
    <name type="scientific">Microplitis demolitor bracovirus (isolate Webb)</name>
    <name type="common">MdBV</name>
    <dbReference type="NCBI Taxonomy" id="654919"/>
    <lineage>
        <taxon>Viruses</taxon>
        <taxon>Viruses incertae sedis</taxon>
        <taxon>Polydnaviriformidae</taxon>
        <taxon>Bracoviriform</taxon>
        <taxon>Microplitis demolitor bracovirus</taxon>
    </lineage>
</organism>
<sequence length="125" mass="14204">MTQPVLYKYSVIQFPGSFDSSVHNSYVCIPNSWIINRDEKKVIVAVPSNEEVPVSMSCILNNGPPSSHWKTYAGTLKYETGKSKILFTFFKCSYQLYKILIVIDSLQLTDPSNFIPQEMMSPTIQ</sequence>